<evidence type="ECO:0000250" key="1">
    <source>
        <dbReference type="UniProtKB" id="P21238"/>
    </source>
</evidence>
<evidence type="ECO:0000250" key="2">
    <source>
        <dbReference type="UniProtKB" id="P21240"/>
    </source>
</evidence>
<evidence type="ECO:0000255" key="3"/>
<evidence type="ECO:0000256" key="4">
    <source>
        <dbReference type="SAM" id="MobiDB-lite"/>
    </source>
</evidence>
<evidence type="ECO:0000269" key="5">
    <source>
    </source>
</evidence>
<evidence type="ECO:0000269" key="6">
    <source>
    </source>
</evidence>
<evidence type="ECO:0000269" key="7">
    <source ref="7"/>
</evidence>
<evidence type="ECO:0000305" key="8"/>
<dbReference type="EMBL" id="AB019234">
    <property type="protein sequence ID" value="BAB11583.1"/>
    <property type="status" value="ALT_SEQ"/>
    <property type="molecule type" value="Genomic_DNA"/>
</dbReference>
<dbReference type="EMBL" id="AB009049">
    <property type="protein sequence ID" value="BAB11583.1"/>
    <property type="status" value="JOINED"/>
    <property type="molecule type" value="Genomic_DNA"/>
</dbReference>
<dbReference type="EMBL" id="CP002688">
    <property type="protein sequence ID" value="AED96773.1"/>
    <property type="molecule type" value="Genomic_DNA"/>
</dbReference>
<dbReference type="EMBL" id="CP002688">
    <property type="protein sequence ID" value="AED96774.1"/>
    <property type="molecule type" value="Genomic_DNA"/>
</dbReference>
<dbReference type="EMBL" id="AK228340">
    <property type="protein sequence ID" value="BAF00280.1"/>
    <property type="molecule type" value="mRNA"/>
</dbReference>
<dbReference type="EMBL" id="AK319025">
    <property type="protein sequence ID" value="BAH57140.1"/>
    <property type="molecule type" value="mRNA"/>
</dbReference>
<dbReference type="RefSeq" id="NP_001032083.1">
    <property type="nucleotide sequence ID" value="NM_001037006.4"/>
</dbReference>
<dbReference type="RefSeq" id="NP_200461.4">
    <property type="nucleotide sequence ID" value="NM_125033.5"/>
</dbReference>
<dbReference type="SMR" id="C0Z361"/>
<dbReference type="BioGRID" id="20995">
    <property type="interactions" value="28"/>
</dbReference>
<dbReference type="FunCoup" id="C0Z361">
    <property type="interactions" value="361"/>
</dbReference>
<dbReference type="IntAct" id="C0Z361">
    <property type="interactions" value="2"/>
</dbReference>
<dbReference type="STRING" id="3702.C0Z361"/>
<dbReference type="iPTMnet" id="C0Z361"/>
<dbReference type="PaxDb" id="3702-AT5G56500.2"/>
<dbReference type="ProMEX" id="C0Z361"/>
<dbReference type="ProteomicsDB" id="220438"/>
<dbReference type="EnsemblPlants" id="AT5G56500.1">
    <property type="protein sequence ID" value="AT5G56500.1"/>
    <property type="gene ID" value="AT5G56500"/>
</dbReference>
<dbReference type="EnsemblPlants" id="AT5G56500.2">
    <property type="protein sequence ID" value="AT5G56500.2"/>
    <property type="gene ID" value="AT5G56500"/>
</dbReference>
<dbReference type="GeneID" id="835751"/>
<dbReference type="Gramene" id="AT5G56500.1">
    <property type="protein sequence ID" value="AT5G56500.1"/>
    <property type="gene ID" value="AT5G56500"/>
</dbReference>
<dbReference type="Gramene" id="AT5G56500.2">
    <property type="protein sequence ID" value="AT5G56500.2"/>
    <property type="gene ID" value="AT5G56500"/>
</dbReference>
<dbReference type="KEGG" id="ath:AT5G56500"/>
<dbReference type="Araport" id="AT5G56500"/>
<dbReference type="TAIR" id="AT5G56500">
    <property type="gene designation" value="CPN60BETA3"/>
</dbReference>
<dbReference type="eggNOG" id="KOG0356">
    <property type="taxonomic scope" value="Eukaryota"/>
</dbReference>
<dbReference type="HOGENOM" id="CLU_016503_4_1_1"/>
<dbReference type="InParanoid" id="C0Z361"/>
<dbReference type="OMA" id="PRICAMA"/>
<dbReference type="PhylomeDB" id="C0Z361"/>
<dbReference type="CD-CODE" id="4299E36E">
    <property type="entry name" value="Nucleolus"/>
</dbReference>
<dbReference type="PRO" id="PR:C0Z361"/>
<dbReference type="Proteomes" id="UP000006548">
    <property type="component" value="Chromosome 5"/>
</dbReference>
<dbReference type="ExpressionAtlas" id="C0Z361">
    <property type="expression patterns" value="baseline and differential"/>
</dbReference>
<dbReference type="GO" id="GO:0009507">
    <property type="term" value="C:chloroplast"/>
    <property type="evidence" value="ECO:0007005"/>
    <property type="project" value="TAIR"/>
</dbReference>
<dbReference type="GO" id="GO:0009570">
    <property type="term" value="C:chloroplast stroma"/>
    <property type="evidence" value="ECO:0007005"/>
    <property type="project" value="TAIR"/>
</dbReference>
<dbReference type="GO" id="GO:0005739">
    <property type="term" value="C:mitochondrion"/>
    <property type="evidence" value="ECO:0007005"/>
    <property type="project" value="TAIR"/>
</dbReference>
<dbReference type="GO" id="GO:0009536">
    <property type="term" value="C:plastid"/>
    <property type="evidence" value="ECO:0007005"/>
    <property type="project" value="TAIR"/>
</dbReference>
<dbReference type="GO" id="GO:0005524">
    <property type="term" value="F:ATP binding"/>
    <property type="evidence" value="ECO:0007669"/>
    <property type="project" value="UniProtKB-KW"/>
</dbReference>
<dbReference type="GO" id="GO:0140662">
    <property type="term" value="F:ATP-dependent protein folding chaperone"/>
    <property type="evidence" value="ECO:0007669"/>
    <property type="project" value="InterPro"/>
</dbReference>
<dbReference type="GO" id="GO:0042026">
    <property type="term" value="P:protein refolding"/>
    <property type="evidence" value="ECO:0007669"/>
    <property type="project" value="InterPro"/>
</dbReference>
<dbReference type="CDD" id="cd03344">
    <property type="entry name" value="GroEL"/>
    <property type="match status" value="1"/>
</dbReference>
<dbReference type="FunFam" id="3.50.7.10:FF:000001">
    <property type="entry name" value="60 kDa chaperonin"/>
    <property type="match status" value="1"/>
</dbReference>
<dbReference type="Gene3D" id="3.50.7.10">
    <property type="entry name" value="GroEL"/>
    <property type="match status" value="1"/>
</dbReference>
<dbReference type="Gene3D" id="1.10.560.10">
    <property type="entry name" value="GroEL-like equatorial domain"/>
    <property type="match status" value="1"/>
</dbReference>
<dbReference type="Gene3D" id="3.30.260.10">
    <property type="entry name" value="TCP-1-like chaperonin intermediate domain"/>
    <property type="match status" value="1"/>
</dbReference>
<dbReference type="HAMAP" id="MF_00600">
    <property type="entry name" value="CH60"/>
    <property type="match status" value="1"/>
</dbReference>
<dbReference type="InterPro" id="IPR018370">
    <property type="entry name" value="Chaperonin_Cpn60_CS"/>
</dbReference>
<dbReference type="InterPro" id="IPR001844">
    <property type="entry name" value="Cpn60/GroEL"/>
</dbReference>
<dbReference type="InterPro" id="IPR002423">
    <property type="entry name" value="Cpn60/GroEL/TCP-1"/>
</dbReference>
<dbReference type="InterPro" id="IPR027409">
    <property type="entry name" value="GroEL-like_apical_dom_sf"/>
</dbReference>
<dbReference type="InterPro" id="IPR027413">
    <property type="entry name" value="GROEL-like_equatorial_sf"/>
</dbReference>
<dbReference type="InterPro" id="IPR027410">
    <property type="entry name" value="TCP-1-like_intermed_sf"/>
</dbReference>
<dbReference type="NCBIfam" id="TIGR02348">
    <property type="entry name" value="GroEL"/>
    <property type="match status" value="1"/>
</dbReference>
<dbReference type="NCBIfam" id="NF000592">
    <property type="entry name" value="PRK00013.1"/>
    <property type="match status" value="1"/>
</dbReference>
<dbReference type="NCBIfam" id="NF009487">
    <property type="entry name" value="PRK12849.1"/>
    <property type="match status" value="1"/>
</dbReference>
<dbReference type="NCBIfam" id="NF009488">
    <property type="entry name" value="PRK12850.1"/>
    <property type="match status" value="1"/>
</dbReference>
<dbReference type="NCBIfam" id="NF009489">
    <property type="entry name" value="PRK12851.1"/>
    <property type="match status" value="1"/>
</dbReference>
<dbReference type="PANTHER" id="PTHR45633">
    <property type="entry name" value="60 KDA HEAT SHOCK PROTEIN, MITOCHONDRIAL"/>
    <property type="match status" value="1"/>
</dbReference>
<dbReference type="Pfam" id="PF00118">
    <property type="entry name" value="Cpn60_TCP1"/>
    <property type="match status" value="1"/>
</dbReference>
<dbReference type="PRINTS" id="PR00298">
    <property type="entry name" value="CHAPERONIN60"/>
</dbReference>
<dbReference type="SUPFAM" id="SSF52029">
    <property type="entry name" value="GroEL apical domain-like"/>
    <property type="match status" value="1"/>
</dbReference>
<dbReference type="SUPFAM" id="SSF48592">
    <property type="entry name" value="GroEL equatorial domain-like"/>
    <property type="match status" value="1"/>
</dbReference>
<dbReference type="SUPFAM" id="SSF54849">
    <property type="entry name" value="GroEL-intermediate domain like"/>
    <property type="match status" value="1"/>
</dbReference>
<dbReference type="PROSITE" id="PS00296">
    <property type="entry name" value="CHAPERONINS_CPN60"/>
    <property type="match status" value="1"/>
</dbReference>
<protein>
    <recommendedName>
        <fullName>Chaperonin 60 subunit beta 3, chloroplastic</fullName>
        <shortName>CPN-60 beta 3</shortName>
    </recommendedName>
</protein>
<comment type="function">
    <text evidence="6 7">Involved in protein assisted folding.</text>
</comment>
<comment type="subunit">
    <text evidence="6 7">Part of the Cpn60 complex composed of 7 alpha and 7 beta subunits. Can also form a complex composed of 14 beta subunits only. Both complexes show ATPase activity. The Cpn60 complex interacts with the Cpn10 complex.</text>
</comment>
<comment type="subcellular location">
    <subcellularLocation>
        <location evidence="8">Plastid</location>
        <location evidence="8">Chloroplast</location>
    </subcellularLocation>
</comment>
<comment type="induction">
    <text evidence="5">Up-regulated by light.</text>
</comment>
<comment type="miscellaneous">
    <text>Assisted protein folding requires ATP hydrolysis, but not K(+) ions.</text>
</comment>
<comment type="similarity">
    <text evidence="8">Belongs to the chaperonin (HSP60) family.</text>
</comment>
<comment type="sequence caution" evidence="8">
    <conflict type="erroneous gene model prediction">
        <sequence resource="EMBL-CDS" id="BAB11583"/>
    </conflict>
</comment>
<sequence length="597" mass="63325">MASTFSATSSMGSSLAPPSNRLSSFVSISSSSFGRTQSIAQRKARFPKIYAAKQLHFNKDGTAIKKLQAGVNKLADLVGVTLGPKGRNVVLESKYGSPRIVNDGVTVAREVELEDPVENIGAKLVRQAASKTNDLAGDGTTTSVVLAQGLIAEGVKVVAAGANPVLITRGIEKTTKALVAELKKMSKEVEDSELADVAAVSAGNNYEVGNMIAEAMAKVGRKGVVTLEEGKSAENSLYVVEGMQFDRGYISPYFVTDSEKMCAEYENCKLFLVDKKITNARDIISILEDAIKGGYPLLIIAEDIEQEPLATLVVNKLRGTIKVAALKAPGFGERKSQYLDDIAALTGATVIREEVGLQLEKVGPEVLGNAGKVVLTKDTTTIVGDGSTEEVVKKRVEQIKNLIEAAEQDYEKEKLNERIAKLSGGVAVIQVGAQTETELKEKKLRVEDALNATKAAVEEGIVVGGGCTLLRLASKVDAIKETLANDEEKVGADIVKKALSYPLKLIAKNAGVNGSVVSEKVLSSDNPKHGYNAATGKYEDLMAAGIIDPTKVVRCCLEHASSVAKTFLMSDCVVVEIKEPESAAPAGNPMDNSGYGF</sequence>
<keyword id="KW-0067">ATP-binding</keyword>
<keyword id="KW-0143">Chaperone</keyword>
<keyword id="KW-0150">Chloroplast</keyword>
<keyword id="KW-0175">Coiled coil</keyword>
<keyword id="KW-0547">Nucleotide-binding</keyword>
<keyword id="KW-0597">Phosphoprotein</keyword>
<keyword id="KW-0934">Plastid</keyword>
<keyword id="KW-1185">Reference proteome</keyword>
<keyword id="KW-0809">Transit peptide</keyword>
<proteinExistence type="evidence at protein level"/>
<gene>
    <name type="primary">CPN60B3</name>
    <name type="synonym">Cpn60-B(1)</name>
    <name type="ordered locus">At5g56500</name>
    <name type="ORF">MCD7.27</name>
</gene>
<name>CPNB3_ARATH</name>
<feature type="transit peptide" description="Chloroplast" evidence="3">
    <location>
        <begin position="1"/>
        <end position="29"/>
    </location>
</feature>
<feature type="chain" id="PRO_0000413685" description="Chaperonin 60 subunit beta 3, chloroplastic">
    <location>
        <begin position="30"/>
        <end position="597"/>
    </location>
</feature>
<feature type="region of interest" description="Disordered" evidence="4">
    <location>
        <begin position="1"/>
        <end position="20"/>
    </location>
</feature>
<feature type="coiled-coil region" evidence="3">
    <location>
        <begin position="387"/>
        <end position="489"/>
    </location>
</feature>
<feature type="modified residue" description="Phosphoserine" evidence="1">
    <location>
        <position position="97"/>
    </location>
</feature>
<feature type="modified residue" description="Phosphoserine" evidence="2">
    <location>
        <position position="474"/>
    </location>
</feature>
<feature type="sequence conflict" description="In Ref. 4; BAF00280." evidence="8" ref="4">
    <original>G</original>
    <variation>R</variation>
    <location>
        <position position="545"/>
    </location>
</feature>
<organism>
    <name type="scientific">Arabidopsis thaliana</name>
    <name type="common">Mouse-ear cress</name>
    <dbReference type="NCBI Taxonomy" id="3702"/>
    <lineage>
        <taxon>Eukaryota</taxon>
        <taxon>Viridiplantae</taxon>
        <taxon>Streptophyta</taxon>
        <taxon>Embryophyta</taxon>
        <taxon>Tracheophyta</taxon>
        <taxon>Spermatophyta</taxon>
        <taxon>Magnoliopsida</taxon>
        <taxon>eudicotyledons</taxon>
        <taxon>Gunneridae</taxon>
        <taxon>Pentapetalae</taxon>
        <taxon>rosids</taxon>
        <taxon>malvids</taxon>
        <taxon>Brassicales</taxon>
        <taxon>Brassicaceae</taxon>
        <taxon>Camelineae</taxon>
        <taxon>Arabidopsis</taxon>
    </lineage>
</organism>
<reference key="1">
    <citation type="journal article" date="2000" name="DNA Res.">
        <title>Structural analysis of Arabidopsis thaliana chromosome 5. X. Sequence features of the regions of 3,076,755 bp covered by sixty P1 and TAC clones.</title>
        <authorList>
            <person name="Sato S."/>
            <person name="Nakamura Y."/>
            <person name="Kaneko T."/>
            <person name="Katoh T."/>
            <person name="Asamizu E."/>
            <person name="Kotani H."/>
            <person name="Tabata S."/>
        </authorList>
    </citation>
    <scope>NUCLEOTIDE SEQUENCE [LARGE SCALE GENOMIC DNA]</scope>
    <source>
        <strain>cv. Columbia</strain>
    </source>
</reference>
<reference key="2">
    <citation type="journal article" date="1998" name="DNA Res.">
        <title>Structural analysis of Arabidopsis thaliana chromosome 5. IV. Sequence features of the regions of 1,456,315 bp covered by nineteen physically assigned P1 and TAC clones.</title>
        <authorList>
            <person name="Sato S."/>
            <person name="Kaneko T."/>
            <person name="Kotani H."/>
            <person name="Nakamura Y."/>
            <person name="Asamizu E."/>
            <person name="Miyajima N."/>
            <person name="Tabata S."/>
        </authorList>
    </citation>
    <scope>NUCLEOTIDE SEQUENCE [LARGE SCALE GENOMIC DNA]</scope>
    <source>
        <strain>cv. Columbia</strain>
    </source>
</reference>
<reference key="3">
    <citation type="journal article" date="2017" name="Plant J.">
        <title>Araport11: a complete reannotation of the Arabidopsis thaliana reference genome.</title>
        <authorList>
            <person name="Cheng C.Y."/>
            <person name="Krishnakumar V."/>
            <person name="Chan A.P."/>
            <person name="Thibaud-Nissen F."/>
            <person name="Schobel S."/>
            <person name="Town C.D."/>
        </authorList>
    </citation>
    <scope>GENOME REANNOTATION</scope>
    <source>
        <strain>cv. Columbia</strain>
    </source>
</reference>
<reference key="4">
    <citation type="submission" date="2006-07" db="EMBL/GenBank/DDBJ databases">
        <title>Large-scale analysis of RIKEN Arabidopsis full-length (RAFL) cDNAs.</title>
        <authorList>
            <person name="Totoki Y."/>
            <person name="Seki M."/>
            <person name="Ishida J."/>
            <person name="Nakajima M."/>
            <person name="Enju A."/>
            <person name="Kamiya A."/>
            <person name="Narusaka M."/>
            <person name="Shin-i T."/>
            <person name="Nakagawa M."/>
            <person name="Sakamoto N."/>
            <person name="Oishi K."/>
            <person name="Kohara Y."/>
            <person name="Kobayashi M."/>
            <person name="Toyoda A."/>
            <person name="Sakaki Y."/>
            <person name="Sakurai T."/>
            <person name="Iida K."/>
            <person name="Akiyama K."/>
            <person name="Satou M."/>
            <person name="Toyoda T."/>
            <person name="Konagaya A."/>
            <person name="Carninci P."/>
            <person name="Kawai J."/>
            <person name="Hayashizaki Y."/>
            <person name="Shinozaki K."/>
        </authorList>
    </citation>
    <scope>NUCLEOTIDE SEQUENCE [LARGE SCALE MRNA]</scope>
    <source>
        <strain>cv. Columbia</strain>
    </source>
</reference>
<reference key="5">
    <citation type="journal article" date="2009" name="DNA Res.">
        <title>Analysis of multiple occurrences of alternative splicing events in Arabidopsis thaliana using novel sequenced full-length cDNAs.</title>
        <authorList>
            <person name="Iida K."/>
            <person name="Fukami-Kobayashi K."/>
            <person name="Toyoda A."/>
            <person name="Sakaki Y."/>
            <person name="Kobayashi M."/>
            <person name="Seki M."/>
            <person name="Shinozaki K."/>
        </authorList>
    </citation>
    <scope>NUCLEOTIDE SEQUENCE [LARGE SCALE MRNA]</scope>
    <source>
        <strain>cv. Columbia</strain>
        <tissue>Rosette leaf</tissue>
    </source>
</reference>
<reference key="6">
    <citation type="journal article" date="1993" name="Plant Physiol.">
        <title>Differential involvement of the circadian clock in the expression of genes required for ribulose-1,5-bisphosphate carboxylase/oxygenase synthesis, assembly, and activation in Arabidopsis thaliana.</title>
        <authorList>
            <person name="Pilgrim M.L."/>
            <person name="McClung C.R."/>
        </authorList>
    </citation>
    <scope>INDUCTION BY LIGHT</scope>
</reference>
<reference key="7">
    <citation type="journal article" date="1995" name="J. Biol. Chem.">
        <title>Functional characterization of the higher plant chloroplast chaperonins.</title>
        <authorList>
            <person name="Viitanen P.V."/>
            <person name="Schmidt M."/>
            <person name="Buchner J."/>
            <person name="Suzuki T."/>
            <person name="Vierling E."/>
            <person name="Dickson R."/>
            <person name="Lorimer G.H."/>
            <person name="Gatenby A."/>
            <person name="Soll J."/>
        </authorList>
    </citation>
    <scope>FUNCTION</scope>
    <scope>INTERACTION</scope>
</reference>
<reference key="8">
    <citation type="journal article" date="2001" name="Cell Stress Chaperones">
        <title>Arabidopsis thaliana type I and II chaperonins.</title>
        <authorList>
            <person name="Hill J.E."/>
            <person name="Hemmingsen S.M."/>
        </authorList>
    </citation>
    <scope>GENE FAMILY</scope>
    <scope>NOMENCLATURE</scope>
</reference>
<reference key="9">
    <citation type="journal article" date="2009" name="Cell Stress Chaperones">
        <title>Differential effects of co-chaperonin homologs on cpn60 oligomers.</title>
        <authorList>
            <person name="Bonshtien A.L."/>
            <person name="Parnas A."/>
            <person name="Sharkia R."/>
            <person name="Niv A."/>
            <person name="Mizrahi I."/>
            <person name="Azem A."/>
            <person name="Weiss C."/>
        </authorList>
    </citation>
    <scope>FUNCTION</scope>
    <scope>IDENTIFICATION IN CPN60 COMPLEX</scope>
</reference>
<reference key="10">
    <citation type="journal article" date="2011" name="PLoS Biol.">
        <title>A chaperonin subunit with unique structures is essential for folding of a specific substrate.</title>
        <authorList>
            <person name="Peng L."/>
            <person name="Fukao Y."/>
            <person name="Myouga F."/>
            <person name="Motohashi R."/>
            <person name="Shinozaki K."/>
            <person name="Shikanai T."/>
        </authorList>
    </citation>
    <scope>GENE FAMILY</scope>
    <scope>NOMENCLATURE</scope>
</reference>
<accession>C0Z361</accession>
<accession>Q0WRG9</accession>
<accession>Q9FHA9</accession>